<proteinExistence type="inferred from homology"/>
<dbReference type="EC" id="2.7.7.56" evidence="1"/>
<dbReference type="EMBL" id="CP000437">
    <property type="protein sequence ID" value="ABI82356.1"/>
    <property type="molecule type" value="Genomic_DNA"/>
</dbReference>
<dbReference type="RefSeq" id="WP_003014543.1">
    <property type="nucleotide sequence ID" value="NC_017463.1"/>
</dbReference>
<dbReference type="SMR" id="Q0BNH8"/>
<dbReference type="KEGG" id="fth:FTH_0352"/>
<dbReference type="GO" id="GO:0000175">
    <property type="term" value="F:3'-5'-RNA exonuclease activity"/>
    <property type="evidence" value="ECO:0007669"/>
    <property type="project" value="UniProtKB-UniRule"/>
</dbReference>
<dbReference type="GO" id="GO:0000049">
    <property type="term" value="F:tRNA binding"/>
    <property type="evidence" value="ECO:0007669"/>
    <property type="project" value="UniProtKB-UniRule"/>
</dbReference>
<dbReference type="GO" id="GO:0009022">
    <property type="term" value="F:tRNA nucleotidyltransferase activity"/>
    <property type="evidence" value="ECO:0007669"/>
    <property type="project" value="UniProtKB-UniRule"/>
</dbReference>
<dbReference type="GO" id="GO:0016075">
    <property type="term" value="P:rRNA catabolic process"/>
    <property type="evidence" value="ECO:0007669"/>
    <property type="project" value="UniProtKB-UniRule"/>
</dbReference>
<dbReference type="GO" id="GO:0006364">
    <property type="term" value="P:rRNA processing"/>
    <property type="evidence" value="ECO:0007669"/>
    <property type="project" value="UniProtKB-KW"/>
</dbReference>
<dbReference type="GO" id="GO:0008033">
    <property type="term" value="P:tRNA processing"/>
    <property type="evidence" value="ECO:0007669"/>
    <property type="project" value="UniProtKB-UniRule"/>
</dbReference>
<dbReference type="CDD" id="cd11362">
    <property type="entry name" value="RNase_PH_bact"/>
    <property type="match status" value="1"/>
</dbReference>
<dbReference type="FunFam" id="3.30.230.70:FF:000003">
    <property type="entry name" value="Ribonuclease PH"/>
    <property type="match status" value="1"/>
</dbReference>
<dbReference type="Gene3D" id="3.30.230.70">
    <property type="entry name" value="GHMP Kinase, N-terminal domain"/>
    <property type="match status" value="1"/>
</dbReference>
<dbReference type="HAMAP" id="MF_00564">
    <property type="entry name" value="RNase_PH"/>
    <property type="match status" value="1"/>
</dbReference>
<dbReference type="InterPro" id="IPR001247">
    <property type="entry name" value="ExoRNase_PH_dom1"/>
</dbReference>
<dbReference type="InterPro" id="IPR015847">
    <property type="entry name" value="ExoRNase_PH_dom2"/>
</dbReference>
<dbReference type="InterPro" id="IPR036345">
    <property type="entry name" value="ExoRNase_PH_dom2_sf"/>
</dbReference>
<dbReference type="InterPro" id="IPR027408">
    <property type="entry name" value="PNPase/RNase_PH_dom_sf"/>
</dbReference>
<dbReference type="InterPro" id="IPR020568">
    <property type="entry name" value="Ribosomal_Su5_D2-typ_SF"/>
</dbReference>
<dbReference type="InterPro" id="IPR050080">
    <property type="entry name" value="RNase_PH"/>
</dbReference>
<dbReference type="InterPro" id="IPR002381">
    <property type="entry name" value="RNase_PH_bac-type"/>
</dbReference>
<dbReference type="InterPro" id="IPR018336">
    <property type="entry name" value="RNase_PH_CS"/>
</dbReference>
<dbReference type="NCBIfam" id="TIGR01966">
    <property type="entry name" value="RNasePH"/>
    <property type="match status" value="1"/>
</dbReference>
<dbReference type="PANTHER" id="PTHR11953">
    <property type="entry name" value="EXOSOME COMPLEX COMPONENT"/>
    <property type="match status" value="1"/>
</dbReference>
<dbReference type="PANTHER" id="PTHR11953:SF0">
    <property type="entry name" value="EXOSOME COMPLEX COMPONENT RRP41"/>
    <property type="match status" value="1"/>
</dbReference>
<dbReference type="Pfam" id="PF01138">
    <property type="entry name" value="RNase_PH"/>
    <property type="match status" value="1"/>
</dbReference>
<dbReference type="Pfam" id="PF03725">
    <property type="entry name" value="RNase_PH_C"/>
    <property type="match status" value="1"/>
</dbReference>
<dbReference type="SUPFAM" id="SSF55666">
    <property type="entry name" value="Ribonuclease PH domain 2-like"/>
    <property type="match status" value="1"/>
</dbReference>
<dbReference type="SUPFAM" id="SSF54211">
    <property type="entry name" value="Ribosomal protein S5 domain 2-like"/>
    <property type="match status" value="1"/>
</dbReference>
<dbReference type="PROSITE" id="PS01277">
    <property type="entry name" value="RIBONUCLEASE_PH"/>
    <property type="match status" value="1"/>
</dbReference>
<accession>Q0BNH8</accession>
<feature type="chain" id="PRO_1000024810" description="Ribonuclease PH">
    <location>
        <begin position="1"/>
        <end position="235"/>
    </location>
</feature>
<feature type="binding site" evidence="1">
    <location>
        <position position="86"/>
    </location>
    <ligand>
        <name>phosphate</name>
        <dbReference type="ChEBI" id="CHEBI:43474"/>
        <note>substrate</note>
    </ligand>
</feature>
<feature type="binding site" evidence="1">
    <location>
        <begin position="124"/>
        <end position="126"/>
    </location>
    <ligand>
        <name>phosphate</name>
        <dbReference type="ChEBI" id="CHEBI:43474"/>
        <note>substrate</note>
    </ligand>
</feature>
<comment type="function">
    <text evidence="1">Phosphorolytic 3'-5' exoribonuclease that plays an important role in tRNA 3'-end maturation. Removes nucleotide residues following the 3'-CCA terminus of tRNAs; can also add nucleotides to the ends of RNA molecules by using nucleoside diphosphates as substrates, but this may not be physiologically important. Probably plays a role in initiation of 16S rRNA degradation (leading to ribosome degradation) during starvation.</text>
</comment>
<comment type="catalytic activity">
    <reaction evidence="1">
        <text>tRNA(n+1) + phosphate = tRNA(n) + a ribonucleoside 5'-diphosphate</text>
        <dbReference type="Rhea" id="RHEA:10628"/>
        <dbReference type="Rhea" id="RHEA-COMP:17343"/>
        <dbReference type="Rhea" id="RHEA-COMP:17344"/>
        <dbReference type="ChEBI" id="CHEBI:43474"/>
        <dbReference type="ChEBI" id="CHEBI:57930"/>
        <dbReference type="ChEBI" id="CHEBI:173114"/>
        <dbReference type="EC" id="2.7.7.56"/>
    </reaction>
</comment>
<comment type="subunit">
    <text evidence="1">Homohexameric ring arranged as a trimer of dimers.</text>
</comment>
<comment type="similarity">
    <text evidence="1">Belongs to the RNase PH family.</text>
</comment>
<gene>
    <name evidence="1" type="primary">rph</name>
    <name type="ordered locus">FTH_0352</name>
</gene>
<protein>
    <recommendedName>
        <fullName evidence="1">Ribonuclease PH</fullName>
        <shortName evidence="1">RNase PH</shortName>
        <ecNumber evidence="1">2.7.7.56</ecNumber>
    </recommendedName>
    <alternativeName>
        <fullName evidence="1">tRNA nucleotidyltransferase</fullName>
    </alternativeName>
</protein>
<name>RNPH_FRATO</name>
<keyword id="KW-0548">Nucleotidyltransferase</keyword>
<keyword id="KW-0694">RNA-binding</keyword>
<keyword id="KW-0698">rRNA processing</keyword>
<keyword id="KW-0808">Transferase</keyword>
<keyword id="KW-0819">tRNA processing</keyword>
<keyword id="KW-0820">tRNA-binding</keyword>
<evidence type="ECO:0000255" key="1">
    <source>
        <dbReference type="HAMAP-Rule" id="MF_00564"/>
    </source>
</evidence>
<organism>
    <name type="scientific">Francisella tularensis subsp. holarctica (strain OSU18)</name>
    <dbReference type="NCBI Taxonomy" id="393011"/>
    <lineage>
        <taxon>Bacteria</taxon>
        <taxon>Pseudomonadati</taxon>
        <taxon>Pseudomonadota</taxon>
        <taxon>Gammaproteobacteria</taxon>
        <taxon>Thiotrichales</taxon>
        <taxon>Francisellaceae</taxon>
        <taxon>Francisella</taxon>
    </lineage>
</organism>
<sequence length="235" mass="25441">MRPSGRNNDQLRNLKVTHNFTKHAEGSVLIEFGDTKVICTASVVAGVPKFKKDSGEGWLTAEYGMLPRSTHTRMDREAARGKQSGRTQEIQRLIGRALRASVDLTAIGENTIKVDCDVIQADGGTRTASITGASLAIADAIEYMKQNGILDEQANPLLSQVAAISVGIYNNEPVLDLDYDEDSNAETDMNVVMNSNGGIIEIQGTAEGKDFSEEEFAKMLGLAKKGIKEIFATVF</sequence>
<reference key="1">
    <citation type="journal article" date="2006" name="J. Bacteriol.">
        <title>Chromosome rearrangement and diversification of Francisella tularensis revealed by the type B (OSU18) genome sequence.</title>
        <authorList>
            <person name="Petrosino J.F."/>
            <person name="Xiang Q."/>
            <person name="Karpathy S.E."/>
            <person name="Jiang H."/>
            <person name="Yerrapragada S."/>
            <person name="Liu Y."/>
            <person name="Gioia J."/>
            <person name="Hemphill L."/>
            <person name="Gonzalez A."/>
            <person name="Raghavan T.M."/>
            <person name="Uzman A."/>
            <person name="Fox G.E."/>
            <person name="Highlander S."/>
            <person name="Reichard M."/>
            <person name="Morton R.J."/>
            <person name="Clinkenbeard K.D."/>
            <person name="Weinstock G.M."/>
        </authorList>
    </citation>
    <scope>NUCLEOTIDE SEQUENCE [LARGE SCALE GENOMIC DNA]</scope>
    <source>
        <strain>OSU18</strain>
    </source>
</reference>